<organism>
    <name type="scientific">Saccharomyces cerevisiae (strain ATCC 204508 / S288c)</name>
    <name type="common">Baker's yeast</name>
    <dbReference type="NCBI Taxonomy" id="559292"/>
    <lineage>
        <taxon>Eukaryota</taxon>
        <taxon>Fungi</taxon>
        <taxon>Dikarya</taxon>
        <taxon>Ascomycota</taxon>
        <taxon>Saccharomycotina</taxon>
        <taxon>Saccharomycetes</taxon>
        <taxon>Saccharomycetales</taxon>
        <taxon>Saccharomycetaceae</taxon>
        <taxon>Saccharomyces</taxon>
    </lineage>
</organism>
<feature type="chain" id="PRO_0000073966" description="DNA-directed RNA polymerase III subunit RPC3">
    <location>
        <begin position="1"/>
        <end position="654"/>
    </location>
</feature>
<feature type="region of interest" description="Disordered" evidence="1">
    <location>
        <begin position="381"/>
        <end position="401"/>
    </location>
</feature>
<feature type="region of interest" description="Disordered" evidence="1">
    <location>
        <begin position="422"/>
        <end position="448"/>
    </location>
</feature>
<feature type="region of interest" description="Leucine-zipper">
    <location>
        <begin position="581"/>
        <end position="602"/>
    </location>
</feature>
<feature type="compositionally biased region" description="Acidic residues" evidence="1">
    <location>
        <begin position="429"/>
        <end position="444"/>
    </location>
</feature>
<feature type="modified residue" description="Phosphothreonine" evidence="6">
    <location>
        <position position="27"/>
    </location>
</feature>
<feature type="modified residue" description="Phosphoserine" evidence="7">
    <location>
        <position position="392"/>
    </location>
</feature>
<feature type="modified residue" description="Phosphoserine" evidence="5">
    <location>
        <position position="394"/>
    </location>
</feature>
<feature type="sequence conflict" description="In Ref. 1; CAA45072." evidence="4" ref="1">
    <original>V</original>
    <variation>L</variation>
    <location>
        <position position="637"/>
    </location>
</feature>
<feature type="turn" evidence="8">
    <location>
        <begin position="28"/>
        <end position="33"/>
    </location>
</feature>
<feature type="helix" evidence="8">
    <location>
        <begin position="39"/>
        <end position="41"/>
    </location>
</feature>
<feature type="helix" evidence="8">
    <location>
        <begin position="44"/>
        <end position="56"/>
    </location>
</feature>
<feature type="helix" evidence="8">
    <location>
        <begin position="59"/>
        <end position="70"/>
    </location>
</feature>
<feature type="strand" evidence="8">
    <location>
        <begin position="71"/>
        <end position="74"/>
    </location>
</feature>
<feature type="helix" evidence="8">
    <location>
        <begin position="76"/>
        <end position="82"/>
    </location>
</feature>
<feature type="helix" evidence="8">
    <location>
        <begin position="88"/>
        <end position="100"/>
    </location>
</feature>
<feature type="strand" evidence="8">
    <location>
        <begin position="106"/>
        <end position="109"/>
    </location>
</feature>
<feature type="strand" evidence="8">
    <location>
        <begin position="112"/>
        <end position="114"/>
    </location>
</feature>
<feature type="strand" evidence="8">
    <location>
        <begin position="117"/>
        <end position="120"/>
    </location>
</feature>
<feature type="helix" evidence="8">
    <location>
        <begin position="125"/>
        <end position="142"/>
    </location>
</feature>
<feature type="turn" evidence="9">
    <location>
        <begin position="144"/>
        <end position="149"/>
    </location>
</feature>
<feature type="helix" evidence="8">
    <location>
        <begin position="150"/>
        <end position="166"/>
    </location>
</feature>
<feature type="strand" evidence="8">
    <location>
        <begin position="167"/>
        <end position="170"/>
    </location>
</feature>
<feature type="helix" evidence="8">
    <location>
        <begin position="171"/>
        <end position="177"/>
    </location>
</feature>
<feature type="helix" evidence="8">
    <location>
        <begin position="181"/>
        <end position="197"/>
    </location>
</feature>
<feature type="strand" evidence="9">
    <location>
        <begin position="199"/>
        <end position="202"/>
    </location>
</feature>
<feature type="helix" evidence="8">
    <location>
        <begin position="205"/>
        <end position="207"/>
    </location>
</feature>
<feature type="helix" evidence="8">
    <location>
        <begin position="211"/>
        <end position="217"/>
    </location>
</feature>
<feature type="strand" evidence="8">
    <location>
        <begin position="218"/>
        <end position="221"/>
    </location>
</feature>
<feature type="turn" evidence="8">
    <location>
        <begin position="222"/>
        <end position="224"/>
    </location>
</feature>
<feature type="helix" evidence="8">
    <location>
        <begin position="234"/>
        <end position="257"/>
    </location>
</feature>
<feature type="turn" evidence="8">
    <location>
        <begin position="261"/>
        <end position="263"/>
    </location>
</feature>
<feature type="strand" evidence="9">
    <location>
        <begin position="267"/>
        <end position="270"/>
    </location>
</feature>
<feature type="strand" evidence="8">
    <location>
        <begin position="276"/>
        <end position="281"/>
    </location>
</feature>
<feature type="helix" evidence="8">
    <location>
        <begin position="285"/>
        <end position="303"/>
    </location>
</feature>
<feature type="helix" evidence="8">
    <location>
        <begin position="306"/>
        <end position="317"/>
    </location>
</feature>
<feature type="helix" evidence="8">
    <location>
        <begin position="320"/>
        <end position="322"/>
    </location>
</feature>
<feature type="turn" evidence="8">
    <location>
        <begin position="331"/>
        <end position="333"/>
    </location>
</feature>
<feature type="strand" evidence="8">
    <location>
        <begin position="339"/>
        <end position="341"/>
    </location>
</feature>
<feature type="helix" evidence="8">
    <location>
        <begin position="344"/>
        <end position="355"/>
    </location>
</feature>
<feature type="helix" evidence="8">
    <location>
        <begin position="357"/>
        <end position="359"/>
    </location>
</feature>
<feature type="helix" evidence="8">
    <location>
        <begin position="365"/>
        <end position="369"/>
    </location>
</feature>
<feature type="strand" evidence="8">
    <location>
        <begin position="377"/>
        <end position="379"/>
    </location>
</feature>
<feature type="helix" evidence="8">
    <location>
        <begin position="450"/>
        <end position="462"/>
    </location>
</feature>
<feature type="strand" evidence="8">
    <location>
        <begin position="463"/>
        <end position="465"/>
    </location>
</feature>
<feature type="strand" evidence="8">
    <location>
        <begin position="467"/>
        <end position="472"/>
    </location>
</feature>
<feature type="strand" evidence="8">
    <location>
        <begin position="475"/>
        <end position="477"/>
    </location>
</feature>
<feature type="strand" evidence="8">
    <location>
        <begin position="480"/>
        <end position="483"/>
    </location>
</feature>
<feature type="helix" evidence="8">
    <location>
        <begin position="484"/>
        <end position="499"/>
    </location>
</feature>
<feature type="helix" evidence="8">
    <location>
        <begin position="502"/>
        <end position="513"/>
    </location>
</feature>
<feature type="strand" evidence="8">
    <location>
        <begin position="514"/>
        <end position="516"/>
    </location>
</feature>
<feature type="helix" evidence="8">
    <location>
        <begin position="521"/>
        <end position="526"/>
    </location>
</feature>
<feature type="helix" evidence="8">
    <location>
        <begin position="530"/>
        <end position="541"/>
    </location>
</feature>
<feature type="strand" evidence="8">
    <location>
        <begin position="543"/>
        <end position="545"/>
    </location>
</feature>
<feature type="strand" evidence="9">
    <location>
        <begin position="546"/>
        <end position="551"/>
    </location>
</feature>
<feature type="strand" evidence="8">
    <location>
        <begin position="554"/>
        <end position="556"/>
    </location>
</feature>
<feature type="turn" evidence="9">
    <location>
        <begin position="559"/>
        <end position="561"/>
    </location>
</feature>
<feature type="strand" evidence="9">
    <location>
        <begin position="562"/>
        <end position="567"/>
    </location>
</feature>
<feature type="helix" evidence="8">
    <location>
        <begin position="570"/>
        <end position="598"/>
    </location>
</feature>
<feature type="helix" evidence="8">
    <location>
        <begin position="600"/>
        <end position="606"/>
    </location>
</feature>
<feature type="turn" evidence="8">
    <location>
        <begin position="609"/>
        <end position="613"/>
    </location>
</feature>
<feature type="turn" evidence="8">
    <location>
        <begin position="616"/>
        <end position="618"/>
    </location>
</feature>
<feature type="helix" evidence="8">
    <location>
        <begin position="621"/>
        <end position="644"/>
    </location>
</feature>
<feature type="turn" evidence="8">
    <location>
        <begin position="645"/>
        <end position="647"/>
    </location>
</feature>
<feature type="helix" evidence="8">
    <location>
        <begin position="648"/>
        <end position="651"/>
    </location>
</feature>
<proteinExistence type="evidence at protein level"/>
<evidence type="ECO:0000256" key="1">
    <source>
        <dbReference type="SAM" id="MobiDB-lite"/>
    </source>
</evidence>
<evidence type="ECO:0000269" key="2">
    <source>
    </source>
</evidence>
<evidence type="ECO:0000269" key="3">
    <source>
    </source>
</evidence>
<evidence type="ECO:0000305" key="4"/>
<evidence type="ECO:0007744" key="5">
    <source>
    </source>
</evidence>
<evidence type="ECO:0007744" key="6">
    <source>
    </source>
</evidence>
<evidence type="ECO:0007744" key="7">
    <source>
    </source>
</evidence>
<evidence type="ECO:0007829" key="8">
    <source>
        <dbReference type="PDB" id="7Z31"/>
    </source>
</evidence>
<evidence type="ECO:0007829" key="9">
    <source>
        <dbReference type="PDB" id="8BWS"/>
    </source>
</evidence>
<comment type="function">
    <text>DNA-dependent RNA polymerase catalyzes the transcription of DNA into RNA using the four ribonucleoside triphosphates as substrates. Specific core component of RNA polymerase III which synthesizes small RNAs, such as 5S rRNA and tRNAs.</text>
</comment>
<comment type="subunit">
    <text>Component of the RNA polymerase III (Pol III) complex consisting of 17 subunits.</text>
</comment>
<comment type="interaction">
    <interactant intactId="EBI-15821">
        <id>P32349</id>
    </interactant>
    <interactant intactId="EBI-15835">
        <id>P32910</id>
        <label>RPC34</label>
    </interactant>
    <organismsDiffer>false</organismsDiffer>
    <experiments>4</experiments>
</comment>
<comment type="subcellular location">
    <subcellularLocation>
        <location evidence="2">Cytoplasm</location>
    </subcellularLocation>
    <subcellularLocation>
        <location evidence="2">Nucleus</location>
    </subcellularLocation>
</comment>
<comment type="miscellaneous">
    <text evidence="3">Present with 2520 molecules/cell in log phase SD medium.</text>
</comment>
<comment type="similarity">
    <text evidence="4">Belongs to the eukaryotic RPC3/POLR3C RNA polymerase subunit family.</text>
</comment>
<keyword id="KW-0002">3D-structure</keyword>
<keyword id="KW-0963">Cytoplasm</keyword>
<keyword id="KW-0903">Direct protein sequencing</keyword>
<keyword id="KW-0240">DNA-directed RNA polymerase</keyword>
<keyword id="KW-0539">Nucleus</keyword>
<keyword id="KW-0597">Phosphoprotein</keyword>
<keyword id="KW-1185">Reference proteome</keyword>
<keyword id="KW-0804">Transcription</keyword>
<keyword id="KW-0862">Zinc</keyword>
<protein>
    <recommendedName>
        <fullName>DNA-directed RNA polymerase III subunit RPC3</fullName>
        <shortName>RNA polymerase III subunit C3</shortName>
    </recommendedName>
    <alternativeName>
        <fullName>C82</fullName>
    </alternativeName>
    <alternativeName>
        <fullName>DNA-directed III 74 kDa polypeptide</fullName>
        <shortName>C74</shortName>
    </alternativeName>
</protein>
<dbReference type="EMBL" id="X63500">
    <property type="protein sequence ID" value="CAA45072.1"/>
    <property type="molecule type" value="Genomic_DNA"/>
</dbReference>
<dbReference type="EMBL" id="U25841">
    <property type="protein sequence ID" value="AAB64619.1"/>
    <property type="molecule type" value="Genomic_DNA"/>
</dbReference>
<dbReference type="EMBL" id="BK006949">
    <property type="protein sequence ID" value="DAA11606.1"/>
    <property type="molecule type" value="Genomic_DNA"/>
</dbReference>
<dbReference type="PIR" id="S58820">
    <property type="entry name" value="S58820"/>
</dbReference>
<dbReference type="RefSeq" id="NP_015516.1">
    <property type="nucleotide sequence ID" value="NM_001184287.1"/>
</dbReference>
<dbReference type="PDB" id="5FJ8">
    <property type="method" value="EM"/>
    <property type="resolution" value="3.90 A"/>
    <property type="chains" value="O=1-654"/>
</dbReference>
<dbReference type="PDB" id="5FJ9">
    <property type="method" value="EM"/>
    <property type="resolution" value="4.60 A"/>
    <property type="chains" value="O=1-654"/>
</dbReference>
<dbReference type="PDB" id="5FJA">
    <property type="method" value="EM"/>
    <property type="resolution" value="4.65 A"/>
    <property type="chains" value="O=1-654"/>
</dbReference>
<dbReference type="PDB" id="6CNB">
    <property type="method" value="EM"/>
    <property type="resolution" value="4.10 A"/>
    <property type="chains" value="O=1-654"/>
</dbReference>
<dbReference type="PDB" id="6CNC">
    <property type="method" value="EM"/>
    <property type="resolution" value="4.10 A"/>
    <property type="chains" value="O=1-654"/>
</dbReference>
<dbReference type="PDB" id="6CND">
    <property type="method" value="EM"/>
    <property type="resolution" value="4.80 A"/>
    <property type="chains" value="O=1-654"/>
</dbReference>
<dbReference type="PDB" id="6CNF">
    <property type="method" value="EM"/>
    <property type="resolution" value="4.50 A"/>
    <property type="chains" value="O=1-654"/>
</dbReference>
<dbReference type="PDB" id="6EU0">
    <property type="method" value="EM"/>
    <property type="resolution" value="4.00 A"/>
    <property type="chains" value="O=1-654"/>
</dbReference>
<dbReference type="PDB" id="6EU1">
    <property type="method" value="EM"/>
    <property type="resolution" value="3.40 A"/>
    <property type="chains" value="O=1-654"/>
</dbReference>
<dbReference type="PDB" id="6EU2">
    <property type="method" value="EM"/>
    <property type="resolution" value="3.40 A"/>
    <property type="chains" value="O=1-654"/>
</dbReference>
<dbReference type="PDB" id="6EU3">
    <property type="method" value="EM"/>
    <property type="resolution" value="3.30 A"/>
    <property type="chains" value="O=1-654"/>
</dbReference>
<dbReference type="PDB" id="6F40">
    <property type="method" value="EM"/>
    <property type="resolution" value="3.70 A"/>
    <property type="chains" value="O=1-654"/>
</dbReference>
<dbReference type="PDB" id="6F41">
    <property type="method" value="EM"/>
    <property type="resolution" value="4.30 A"/>
    <property type="chains" value="O=1-654"/>
</dbReference>
<dbReference type="PDB" id="6F42">
    <property type="method" value="EM"/>
    <property type="resolution" value="5.50 A"/>
    <property type="chains" value="O=1-654"/>
</dbReference>
<dbReference type="PDB" id="6F44">
    <property type="method" value="EM"/>
    <property type="resolution" value="4.20 A"/>
    <property type="chains" value="O=1-654"/>
</dbReference>
<dbReference type="PDB" id="6TUT">
    <property type="method" value="EM"/>
    <property type="resolution" value="3.25 A"/>
    <property type="chains" value="O=1-654"/>
</dbReference>
<dbReference type="PDB" id="7Z0H">
    <property type="method" value="EM"/>
    <property type="resolution" value="2.60 A"/>
    <property type="chains" value="O=1-654"/>
</dbReference>
<dbReference type="PDB" id="7Z1L">
    <property type="method" value="EM"/>
    <property type="resolution" value="2.80 A"/>
    <property type="chains" value="O=1-654"/>
</dbReference>
<dbReference type="PDB" id="7Z1M">
    <property type="method" value="EM"/>
    <property type="resolution" value="3.40 A"/>
    <property type="chains" value="O=1-654"/>
</dbReference>
<dbReference type="PDB" id="7Z1N">
    <property type="method" value="EM"/>
    <property type="resolution" value="3.90 A"/>
    <property type="chains" value="O=1-654"/>
</dbReference>
<dbReference type="PDB" id="7Z1O">
    <property type="method" value="EM"/>
    <property type="resolution" value="2.70 A"/>
    <property type="chains" value="O=1-654"/>
</dbReference>
<dbReference type="PDB" id="7Z2Z">
    <property type="method" value="EM"/>
    <property type="resolution" value="3.07 A"/>
    <property type="chains" value="O=1-654"/>
</dbReference>
<dbReference type="PDB" id="7Z30">
    <property type="method" value="EM"/>
    <property type="resolution" value="2.90 A"/>
    <property type="chains" value="O=1-654"/>
</dbReference>
<dbReference type="PDB" id="7Z31">
    <property type="method" value="EM"/>
    <property type="resolution" value="2.76 A"/>
    <property type="chains" value="O=1-654"/>
</dbReference>
<dbReference type="PDB" id="8BWS">
    <property type="method" value="EM"/>
    <property type="resolution" value="3.20 A"/>
    <property type="chains" value="O=1-654"/>
</dbReference>
<dbReference type="PDBsum" id="5FJ8"/>
<dbReference type="PDBsum" id="5FJ9"/>
<dbReference type="PDBsum" id="5FJA"/>
<dbReference type="PDBsum" id="6CNB"/>
<dbReference type="PDBsum" id="6CNC"/>
<dbReference type="PDBsum" id="6CND"/>
<dbReference type="PDBsum" id="6CNF"/>
<dbReference type="PDBsum" id="6EU0"/>
<dbReference type="PDBsum" id="6EU1"/>
<dbReference type="PDBsum" id="6EU2"/>
<dbReference type="PDBsum" id="6EU3"/>
<dbReference type="PDBsum" id="6F40"/>
<dbReference type="PDBsum" id="6F41"/>
<dbReference type="PDBsum" id="6F42"/>
<dbReference type="PDBsum" id="6F44"/>
<dbReference type="PDBsum" id="6TUT"/>
<dbReference type="PDBsum" id="7Z0H"/>
<dbReference type="PDBsum" id="7Z1L"/>
<dbReference type="PDBsum" id="7Z1M"/>
<dbReference type="PDBsum" id="7Z1N"/>
<dbReference type="PDBsum" id="7Z1O"/>
<dbReference type="PDBsum" id="7Z2Z"/>
<dbReference type="PDBsum" id="7Z30"/>
<dbReference type="PDBsum" id="7Z31"/>
<dbReference type="PDBsum" id="8BWS"/>
<dbReference type="EMDB" id="EMD-10595"/>
<dbReference type="EMDB" id="EMD-14421"/>
<dbReference type="EMDB" id="EMD-14447"/>
<dbReference type="EMDB" id="EMD-14448"/>
<dbReference type="EMDB" id="EMD-14449"/>
<dbReference type="EMDB" id="EMD-14451"/>
<dbReference type="EMDB" id="EMD-14468"/>
<dbReference type="EMDB" id="EMD-14469"/>
<dbReference type="EMDB" id="EMD-14470"/>
<dbReference type="EMDB" id="EMD-16299"/>
<dbReference type="EMDB" id="EMD-3955"/>
<dbReference type="EMDB" id="EMD-3956"/>
<dbReference type="EMDB" id="EMD-3957"/>
<dbReference type="EMDB" id="EMD-3958"/>
<dbReference type="EMDB" id="EMD-4180"/>
<dbReference type="EMDB" id="EMD-4181"/>
<dbReference type="EMDB" id="EMD-4182"/>
<dbReference type="EMDB" id="EMD-4183"/>
<dbReference type="EMDB" id="EMD-7530"/>
<dbReference type="EMDB" id="EMD-7531"/>
<dbReference type="EMDB" id="EMD-7532"/>
<dbReference type="EMDB" id="EMD-7533"/>
<dbReference type="SMR" id="P32349"/>
<dbReference type="BioGRID" id="36362">
    <property type="interactions" value="615"/>
</dbReference>
<dbReference type="ComplexPortal" id="CPX-2660">
    <property type="entry name" value="DNA-directed RNA polymerase III complex"/>
</dbReference>
<dbReference type="DIP" id="DIP-934N"/>
<dbReference type="FunCoup" id="P32349">
    <property type="interactions" value="593"/>
</dbReference>
<dbReference type="IntAct" id="P32349">
    <property type="interactions" value="37"/>
</dbReference>
<dbReference type="MINT" id="P32349"/>
<dbReference type="STRING" id="4932.YPR190C"/>
<dbReference type="iPTMnet" id="P32349"/>
<dbReference type="PaxDb" id="4932-YPR190C"/>
<dbReference type="PeptideAtlas" id="P32349"/>
<dbReference type="EnsemblFungi" id="YPR190C_mRNA">
    <property type="protein sequence ID" value="YPR190C"/>
    <property type="gene ID" value="YPR190C"/>
</dbReference>
<dbReference type="GeneID" id="856320"/>
<dbReference type="KEGG" id="sce:YPR190C"/>
<dbReference type="AGR" id="SGD:S000006394"/>
<dbReference type="SGD" id="S000006394">
    <property type="gene designation" value="RPC82"/>
</dbReference>
<dbReference type="VEuPathDB" id="FungiDB:YPR190C"/>
<dbReference type="eggNOG" id="KOG2587">
    <property type="taxonomic scope" value="Eukaryota"/>
</dbReference>
<dbReference type="GeneTree" id="ENSGT00390000002799"/>
<dbReference type="HOGENOM" id="CLU_010734_0_0_1"/>
<dbReference type="InParanoid" id="P32349"/>
<dbReference type="OMA" id="KHRFVRH"/>
<dbReference type="OrthoDB" id="272392at2759"/>
<dbReference type="BioCyc" id="YEAST:G3O-34313-MONOMER"/>
<dbReference type="Reactome" id="R-SCE-76066">
    <property type="pathway name" value="RNA Polymerase III Transcription Initiation From Type 2 Promoter"/>
</dbReference>
<dbReference type="BioGRID-ORCS" id="856320">
    <property type="hits" value="7 hits in 10 CRISPR screens"/>
</dbReference>
<dbReference type="EvolutionaryTrace" id="P32349"/>
<dbReference type="PRO" id="PR:P32349"/>
<dbReference type="Proteomes" id="UP000002311">
    <property type="component" value="Chromosome XVI"/>
</dbReference>
<dbReference type="RNAct" id="P32349">
    <property type="molecule type" value="protein"/>
</dbReference>
<dbReference type="GO" id="GO:0005737">
    <property type="term" value="C:cytoplasm"/>
    <property type="evidence" value="ECO:0007669"/>
    <property type="project" value="UniProtKB-SubCell"/>
</dbReference>
<dbReference type="GO" id="GO:0005654">
    <property type="term" value="C:nucleoplasm"/>
    <property type="evidence" value="ECO:0000304"/>
    <property type="project" value="Reactome"/>
</dbReference>
<dbReference type="GO" id="GO:0005634">
    <property type="term" value="C:nucleus"/>
    <property type="evidence" value="ECO:0000303"/>
    <property type="project" value="ComplexPortal"/>
</dbReference>
<dbReference type="GO" id="GO:0005666">
    <property type="term" value="C:RNA polymerase III complex"/>
    <property type="evidence" value="ECO:0000314"/>
    <property type="project" value="SGD"/>
</dbReference>
<dbReference type="GO" id="GO:0003697">
    <property type="term" value="F:single-stranded DNA binding"/>
    <property type="evidence" value="ECO:0007669"/>
    <property type="project" value="InterPro"/>
</dbReference>
<dbReference type="GO" id="GO:0006386">
    <property type="term" value="P:termination of RNA polymerase III transcription"/>
    <property type="evidence" value="ECO:0000314"/>
    <property type="project" value="ComplexPortal"/>
</dbReference>
<dbReference type="GO" id="GO:0006383">
    <property type="term" value="P:transcription by RNA polymerase III"/>
    <property type="evidence" value="ECO:0000314"/>
    <property type="project" value="ComplexPortal"/>
</dbReference>
<dbReference type="GO" id="GO:0006384">
    <property type="term" value="P:transcription initiation at RNA polymerase III promoter"/>
    <property type="evidence" value="ECO:0000314"/>
    <property type="project" value="ComplexPortal"/>
</dbReference>
<dbReference type="GO" id="GO:0042797">
    <property type="term" value="P:tRNA transcription by RNA polymerase III"/>
    <property type="evidence" value="ECO:0000314"/>
    <property type="project" value="SGD"/>
</dbReference>
<dbReference type="FunFam" id="1.10.10.10:FF:000694">
    <property type="entry name" value="DNA-directed RNA polymerase III subunit RPC3"/>
    <property type="match status" value="1"/>
</dbReference>
<dbReference type="FunFam" id="1.10.10.10:FF:000695">
    <property type="entry name" value="DNA-directed RNA polymerase III subunit RPC3"/>
    <property type="match status" value="1"/>
</dbReference>
<dbReference type="Gene3D" id="1.10.10.10">
    <property type="entry name" value="Winged helix-like DNA-binding domain superfamily/Winged helix DNA-binding domain"/>
    <property type="match status" value="2"/>
</dbReference>
<dbReference type="InterPro" id="IPR055207">
    <property type="entry name" value="POLR3C_WHD"/>
</dbReference>
<dbReference type="InterPro" id="IPR013197">
    <property type="entry name" value="RNA_pol_III_RPC82-rel_HTH"/>
</dbReference>
<dbReference type="InterPro" id="IPR008806">
    <property type="entry name" value="RNA_pol_III_Rpc82_C"/>
</dbReference>
<dbReference type="InterPro" id="IPR039748">
    <property type="entry name" value="RPC3"/>
</dbReference>
<dbReference type="InterPro" id="IPR036388">
    <property type="entry name" value="WH-like_DNA-bd_sf"/>
</dbReference>
<dbReference type="PANTHER" id="PTHR12949:SF0">
    <property type="entry name" value="DNA-DIRECTED RNA POLYMERASE III SUBUNIT RPC3"/>
    <property type="match status" value="1"/>
</dbReference>
<dbReference type="PANTHER" id="PTHR12949">
    <property type="entry name" value="RNA POLYMERASE III DNA DIRECTED -RELATED"/>
    <property type="match status" value="1"/>
</dbReference>
<dbReference type="Pfam" id="PF08221">
    <property type="entry name" value="HTH_9"/>
    <property type="match status" value="1"/>
</dbReference>
<dbReference type="Pfam" id="PF22536">
    <property type="entry name" value="POLR3C_WHD"/>
    <property type="match status" value="1"/>
</dbReference>
<dbReference type="Pfam" id="PF05645">
    <property type="entry name" value="RNA_pol_Rpc82"/>
    <property type="match status" value="1"/>
</dbReference>
<dbReference type="Pfam" id="PF20912">
    <property type="entry name" value="RPC3_helical"/>
    <property type="match status" value="1"/>
</dbReference>
<name>RPC3_YEAST</name>
<sequence>MDELLGEALSAENQTGESTVESEKLVTPEDVMTISSLEQRTLNPDLFLYKELVKAHLGERAASVIGMLVALGRLSVRELVEKIDGMDVDSVKTTLVSLTQLRCVKYLQETAISGKKTTYYYYNEEGIHILLYSGLIIDEIITQMRVNDEEEHKQLVAEIVQNVISLGSLTVEDYLSSVTSDSMKYTISSLFVQLCEMGYLIQISKLHYTPIEDLWQFLYEKHYKNIPRNSPLSDLKKRSQAKMNAKTDFAKIINKPNELSQILTVDPKTSLRIVKPTVSLTINLDRFMKGRRSKQLINLAKTRVGSVTAQVYKIALRLTEQKSPKIRDPLTQTGLLQDLEEAKSFQDEAELVEEKTPGLTFNAIDLARHLPAELDLRGSLLSRKPSDNKKRSGSNAAASLPSKKLKTEDGFVIPALPAAVSKSLQESGDTQEEDEEEEDLDADTEDPHSASLINSHLKILASSNFPFLNETKPGVYYVPYSKLMPVLKSSVYEYVIASTLGPSAMRLSRCIRDNKLVSEKIINSTALMKEKDIRSTLASLIRYNSVEIQEVPRTADRSASRAVFLFRCKETHSYNFMRQNLEWNMANLLFKKEKLKQENSTLLKKANRDDVKGRENELLLPSELNQLKMVNERELNVFARLSRLLSLWEVFQMA</sequence>
<reference key="1">
    <citation type="journal article" date="1992" name="Mol. Cell. Biol.">
        <title>RPC82 encodes the highly conserved, third-largest subunit of RNA polymerase C (III) from Saccharomyces cerevisiae.</title>
        <authorList>
            <person name="Chiannilkulchai N."/>
            <person name="Stalder R."/>
            <person name="Riva M."/>
            <person name="Carles C."/>
            <person name="Werner M."/>
            <person name="Sentenac A."/>
        </authorList>
    </citation>
    <scope>NUCLEOTIDE SEQUENCE [GENOMIC DNA]</scope>
    <scope>PARTIAL PROTEIN SEQUENCE</scope>
</reference>
<reference key="2">
    <citation type="journal article" date="1997" name="Nature">
        <title>The nucleotide sequence of Saccharomyces cerevisiae chromosome XVI.</title>
        <authorList>
            <person name="Bussey H."/>
            <person name="Storms R.K."/>
            <person name="Ahmed A."/>
            <person name="Albermann K."/>
            <person name="Allen E."/>
            <person name="Ansorge W."/>
            <person name="Araujo R."/>
            <person name="Aparicio A."/>
            <person name="Barrell B.G."/>
            <person name="Badcock K."/>
            <person name="Benes V."/>
            <person name="Botstein D."/>
            <person name="Bowman S."/>
            <person name="Brueckner M."/>
            <person name="Carpenter J."/>
            <person name="Cherry J.M."/>
            <person name="Chung E."/>
            <person name="Churcher C.M."/>
            <person name="Coster F."/>
            <person name="Davis K."/>
            <person name="Davis R.W."/>
            <person name="Dietrich F.S."/>
            <person name="Delius H."/>
            <person name="DiPaolo T."/>
            <person name="Dubois E."/>
            <person name="Duesterhoeft A."/>
            <person name="Duncan M."/>
            <person name="Floeth M."/>
            <person name="Fortin N."/>
            <person name="Friesen J.D."/>
            <person name="Fritz C."/>
            <person name="Goffeau A."/>
            <person name="Hall J."/>
            <person name="Hebling U."/>
            <person name="Heumann K."/>
            <person name="Hilbert H."/>
            <person name="Hillier L.W."/>
            <person name="Hunicke-Smith S."/>
            <person name="Hyman R.W."/>
            <person name="Johnston M."/>
            <person name="Kalman S."/>
            <person name="Kleine K."/>
            <person name="Komp C."/>
            <person name="Kurdi O."/>
            <person name="Lashkari D."/>
            <person name="Lew H."/>
            <person name="Lin A."/>
            <person name="Lin D."/>
            <person name="Louis E.J."/>
            <person name="Marathe R."/>
            <person name="Messenguy F."/>
            <person name="Mewes H.-W."/>
            <person name="Mirtipati S."/>
            <person name="Moestl D."/>
            <person name="Mueller-Auer S."/>
            <person name="Namath A."/>
            <person name="Nentwich U."/>
            <person name="Oefner P."/>
            <person name="Pearson D."/>
            <person name="Petel F.X."/>
            <person name="Pohl T.M."/>
            <person name="Purnelle B."/>
            <person name="Rajandream M.A."/>
            <person name="Rechmann S."/>
            <person name="Rieger M."/>
            <person name="Riles L."/>
            <person name="Roberts D."/>
            <person name="Schaefer M."/>
            <person name="Scharfe M."/>
            <person name="Scherens B."/>
            <person name="Schramm S."/>
            <person name="Schroeder M."/>
            <person name="Sdicu A.-M."/>
            <person name="Tettelin H."/>
            <person name="Urrestarazu L.A."/>
            <person name="Ushinsky S."/>
            <person name="Vierendeels F."/>
            <person name="Vissers S."/>
            <person name="Voss H."/>
            <person name="Walsh S.V."/>
            <person name="Wambutt R."/>
            <person name="Wang Y."/>
            <person name="Wedler E."/>
            <person name="Wedler H."/>
            <person name="Winnett E."/>
            <person name="Zhong W.-W."/>
            <person name="Zollner A."/>
            <person name="Vo D.H."/>
            <person name="Hani J."/>
        </authorList>
    </citation>
    <scope>NUCLEOTIDE SEQUENCE [LARGE SCALE GENOMIC DNA]</scope>
    <source>
        <strain>ATCC 204508 / S288c</strain>
    </source>
</reference>
<reference key="3">
    <citation type="journal article" date="2014" name="G3 (Bethesda)">
        <title>The reference genome sequence of Saccharomyces cerevisiae: Then and now.</title>
        <authorList>
            <person name="Engel S.R."/>
            <person name="Dietrich F.S."/>
            <person name="Fisk D.G."/>
            <person name="Binkley G."/>
            <person name="Balakrishnan R."/>
            <person name="Costanzo M.C."/>
            <person name="Dwight S.S."/>
            <person name="Hitz B.C."/>
            <person name="Karra K."/>
            <person name="Nash R.S."/>
            <person name="Weng S."/>
            <person name="Wong E.D."/>
            <person name="Lloyd P."/>
            <person name="Skrzypek M.S."/>
            <person name="Miyasato S.R."/>
            <person name="Simison M."/>
            <person name="Cherry J.M."/>
        </authorList>
    </citation>
    <scope>GENOME REANNOTATION</scope>
    <source>
        <strain>ATCC 204508 / S288c</strain>
    </source>
</reference>
<reference key="4">
    <citation type="journal article" date="1998" name="Cold Spring Harb. Symp. Quant. Biol.">
        <title>The yeast RNA polymerase III transcription machinery: a paradigm for eukaryotic gene activation.</title>
        <authorList>
            <person name="Chedin S."/>
            <person name="Ferri M.L."/>
            <person name="Peyroche G."/>
            <person name="Andrau J.-C."/>
            <person name="Jourdain S."/>
            <person name="Lefebvre O."/>
            <person name="Werner M."/>
            <person name="Carles C."/>
            <person name="Sentenac A."/>
        </authorList>
    </citation>
    <scope>REVIEW ON THE RNA POL III COMPLEX</scope>
</reference>
<reference key="5">
    <citation type="journal article" date="2003" name="Nature">
        <title>Global analysis of protein localization in budding yeast.</title>
        <authorList>
            <person name="Huh W.-K."/>
            <person name="Falvo J.V."/>
            <person name="Gerke L.C."/>
            <person name="Carroll A.S."/>
            <person name="Howson R.W."/>
            <person name="Weissman J.S."/>
            <person name="O'Shea E.K."/>
        </authorList>
    </citation>
    <scope>SUBCELLULAR LOCATION [LARGE SCALE ANALYSIS]</scope>
</reference>
<reference key="6">
    <citation type="journal article" date="2003" name="Nature">
        <title>Global analysis of protein expression in yeast.</title>
        <authorList>
            <person name="Ghaemmaghami S."/>
            <person name="Huh W.-K."/>
            <person name="Bower K."/>
            <person name="Howson R.W."/>
            <person name="Belle A."/>
            <person name="Dephoure N."/>
            <person name="O'Shea E.K."/>
            <person name="Weissman J.S."/>
        </authorList>
    </citation>
    <scope>LEVEL OF PROTEIN EXPRESSION [LARGE SCALE ANALYSIS]</scope>
</reference>
<reference key="7">
    <citation type="journal article" date="2007" name="Proc. Natl. Acad. Sci. U.S.A.">
        <title>Analysis of phosphorylation sites on proteins from Saccharomyces cerevisiae by electron transfer dissociation (ETD) mass spectrometry.</title>
        <authorList>
            <person name="Chi A."/>
            <person name="Huttenhower C."/>
            <person name="Geer L.Y."/>
            <person name="Coon J.J."/>
            <person name="Syka J.E.P."/>
            <person name="Bai D.L."/>
            <person name="Shabanowitz J."/>
            <person name="Burke D.J."/>
            <person name="Troyanskaya O.G."/>
            <person name="Hunt D.F."/>
        </authorList>
    </citation>
    <scope>PHOSPHORYLATION [LARGE SCALE ANALYSIS] AT SER-394</scope>
    <scope>IDENTIFICATION BY MASS SPECTROMETRY [LARGE SCALE ANALYSIS]</scope>
</reference>
<reference key="8">
    <citation type="journal article" date="2008" name="Mol. Cell. Proteomics">
        <title>A multidimensional chromatography technology for in-depth phosphoproteome analysis.</title>
        <authorList>
            <person name="Albuquerque C.P."/>
            <person name="Smolka M.B."/>
            <person name="Payne S.H."/>
            <person name="Bafna V."/>
            <person name="Eng J."/>
            <person name="Zhou H."/>
        </authorList>
    </citation>
    <scope>PHOSPHORYLATION [LARGE SCALE ANALYSIS] AT THR-27</scope>
    <scope>IDENTIFICATION BY MASS SPECTROMETRY [LARGE SCALE ANALYSIS]</scope>
</reference>
<reference key="9">
    <citation type="journal article" date="2009" name="Science">
        <title>Global analysis of Cdk1 substrate phosphorylation sites provides insights into evolution.</title>
        <authorList>
            <person name="Holt L.J."/>
            <person name="Tuch B.B."/>
            <person name="Villen J."/>
            <person name="Johnson A.D."/>
            <person name="Gygi S.P."/>
            <person name="Morgan D.O."/>
        </authorList>
    </citation>
    <scope>PHOSPHORYLATION [LARGE SCALE ANALYSIS] AT SER-392</scope>
    <scope>IDENTIFICATION BY MASS SPECTROMETRY [LARGE SCALE ANALYSIS]</scope>
</reference>
<accession>P32349</accession>
<accession>D6W4J0</accession>
<accession>Q06591</accession>
<gene>
    <name type="primary">RPC82</name>
    <name type="synonym">RPC3</name>
    <name type="ordered locus">YPR190C</name>
    <name type="ORF">P9677.11</name>
</gene>